<proteinExistence type="inferred from homology"/>
<gene>
    <name type="primary">sh3pxd2a</name>
    <name type="ORF">si:dkey-82d4.2</name>
</gene>
<sequence>MQFRTVLDVKVVDVEKRRNPSKHYVYLINVTYSDSTSHIIYRRYSKFFDLQMQILDKFPIEGGQKDPKKRIIPFLPGKILFRRSHVRDVAMKRLRFIDDYCRALVRLPPQISQSEEVLRFFETKPDDINPPVEDYGSKRKSGLDSSEPMVLEQYVVVANYERQENSEISLKAGETVDVIEKSESGWWFVSTAEEQGWVPATYLDSQSGTRDDLDLGTSRSGEVTKRRKAHLKRLDRRWTLGGIVNRQQSREEKYVSVQAYASQGKDEIGFEKGVTVEVIQKNLEGWWYIRYQGKEGWAPASYLKKLKDDLSPRKKTLTGPVEIIGNIMEISNLLNKKAVSEKDIQTDGEATTPERHISKSEISLPMPYAPEAGVAPTVVTALGMNSGSSATLQENKSRAEPGSPAIARVAPHRVEIGSPNLRQKPPPRRDANLAFQLPKPPEAPTVEAEYYTIAEFQSSISDGISFRGGQKADVIEKNSGGWWYVQIGDTEGWAPSSYIDKRKKPNLSRRTSTLTRPKVPPPAPPVKKQDSEEGPSLGGSASKAPESPQRVYEEPEYDVPALGFDSELDCNPPKPKTHNSPKPEPRKFEIKSNPAAAERIAQAGKASPLLKVMTSPLRKRNSLENINKEEVIYENEGFRFSSDDFASGCDSHTPRSLTLGRKPFGSSSGGGKPLRKVSPDLNRSHSLGRAERHSSKLFSDESARNPKREPVMRKDVEIRIGQSPLARPKPVVRPKPLLTKSEPQSPERMDISSIRRHLRPTGSLRQGAIRAMRGEDSETASVVSSEDSTSSRSTSDLSSVYSKGSRGGESDHESVLFRTTDAYERAQESELSFPAGVEVEVLEKQESGWWFVRWGSDEGWVPTFYLEPIKHTHNVGIQESRDSPLVDLGSTNKSNSLEKNEQRVQALNNLNQQNLRSMSNPSPPIPSKPPGGFSKPTAMLNGSSVRMRNGVRQAAVRPQSVFVSPPQPLKETNIHTGSLRRNESLGAGDHLRSTGGVRRNSSFTAVRPQPVTDVRVRAGTTITAPAGSSSPLIAQRNGIPISTVRPKPIEKMQLIHNNLREVYVSIADYRGDEETMGFSEGTSLEVLEKNPNGWWYCQVLDGLQGRKGWVPSNYLERKK</sequence>
<name>SPD2A_DANRE</name>
<accession>Q1LYG0</accession>
<reference key="1">
    <citation type="journal article" date="2013" name="Nature">
        <title>The zebrafish reference genome sequence and its relationship to the human genome.</title>
        <authorList>
            <person name="Howe K."/>
            <person name="Clark M.D."/>
            <person name="Torroja C.F."/>
            <person name="Torrance J."/>
            <person name="Berthelot C."/>
            <person name="Muffato M."/>
            <person name="Collins J.E."/>
            <person name="Humphray S."/>
            <person name="McLaren K."/>
            <person name="Matthews L."/>
            <person name="McLaren S."/>
            <person name="Sealy I."/>
            <person name="Caccamo M."/>
            <person name="Churcher C."/>
            <person name="Scott C."/>
            <person name="Barrett J.C."/>
            <person name="Koch R."/>
            <person name="Rauch G.J."/>
            <person name="White S."/>
            <person name="Chow W."/>
            <person name="Kilian B."/>
            <person name="Quintais L.T."/>
            <person name="Guerra-Assuncao J.A."/>
            <person name="Zhou Y."/>
            <person name="Gu Y."/>
            <person name="Yen J."/>
            <person name="Vogel J.H."/>
            <person name="Eyre T."/>
            <person name="Redmond S."/>
            <person name="Banerjee R."/>
            <person name="Chi J."/>
            <person name="Fu B."/>
            <person name="Langley E."/>
            <person name="Maguire S.F."/>
            <person name="Laird G.K."/>
            <person name="Lloyd D."/>
            <person name="Kenyon E."/>
            <person name="Donaldson S."/>
            <person name="Sehra H."/>
            <person name="Almeida-King J."/>
            <person name="Loveland J."/>
            <person name="Trevanion S."/>
            <person name="Jones M."/>
            <person name="Quail M."/>
            <person name="Willey D."/>
            <person name="Hunt A."/>
            <person name="Burton J."/>
            <person name="Sims S."/>
            <person name="McLay K."/>
            <person name="Plumb B."/>
            <person name="Davis J."/>
            <person name="Clee C."/>
            <person name="Oliver K."/>
            <person name="Clark R."/>
            <person name="Riddle C."/>
            <person name="Elliot D."/>
            <person name="Threadgold G."/>
            <person name="Harden G."/>
            <person name="Ware D."/>
            <person name="Begum S."/>
            <person name="Mortimore B."/>
            <person name="Kerry G."/>
            <person name="Heath P."/>
            <person name="Phillimore B."/>
            <person name="Tracey A."/>
            <person name="Corby N."/>
            <person name="Dunn M."/>
            <person name="Johnson C."/>
            <person name="Wood J."/>
            <person name="Clark S."/>
            <person name="Pelan S."/>
            <person name="Griffiths G."/>
            <person name="Smith M."/>
            <person name="Glithero R."/>
            <person name="Howden P."/>
            <person name="Barker N."/>
            <person name="Lloyd C."/>
            <person name="Stevens C."/>
            <person name="Harley J."/>
            <person name="Holt K."/>
            <person name="Panagiotidis G."/>
            <person name="Lovell J."/>
            <person name="Beasley H."/>
            <person name="Henderson C."/>
            <person name="Gordon D."/>
            <person name="Auger K."/>
            <person name="Wright D."/>
            <person name="Collins J."/>
            <person name="Raisen C."/>
            <person name="Dyer L."/>
            <person name="Leung K."/>
            <person name="Robertson L."/>
            <person name="Ambridge K."/>
            <person name="Leongamornlert D."/>
            <person name="McGuire S."/>
            <person name="Gilderthorp R."/>
            <person name="Griffiths C."/>
            <person name="Manthravadi D."/>
            <person name="Nichol S."/>
            <person name="Barker G."/>
            <person name="Whitehead S."/>
            <person name="Kay M."/>
            <person name="Brown J."/>
            <person name="Murnane C."/>
            <person name="Gray E."/>
            <person name="Humphries M."/>
            <person name="Sycamore N."/>
            <person name="Barker D."/>
            <person name="Saunders D."/>
            <person name="Wallis J."/>
            <person name="Babbage A."/>
            <person name="Hammond S."/>
            <person name="Mashreghi-Mohammadi M."/>
            <person name="Barr L."/>
            <person name="Martin S."/>
            <person name="Wray P."/>
            <person name="Ellington A."/>
            <person name="Matthews N."/>
            <person name="Ellwood M."/>
            <person name="Woodmansey R."/>
            <person name="Clark G."/>
            <person name="Cooper J."/>
            <person name="Tromans A."/>
            <person name="Grafham D."/>
            <person name="Skuce C."/>
            <person name="Pandian R."/>
            <person name="Andrews R."/>
            <person name="Harrison E."/>
            <person name="Kimberley A."/>
            <person name="Garnett J."/>
            <person name="Fosker N."/>
            <person name="Hall R."/>
            <person name="Garner P."/>
            <person name="Kelly D."/>
            <person name="Bird C."/>
            <person name="Palmer S."/>
            <person name="Gehring I."/>
            <person name="Berger A."/>
            <person name="Dooley C.M."/>
            <person name="Ersan-Urun Z."/>
            <person name="Eser C."/>
            <person name="Geiger H."/>
            <person name="Geisler M."/>
            <person name="Karotki L."/>
            <person name="Kirn A."/>
            <person name="Konantz J."/>
            <person name="Konantz M."/>
            <person name="Oberlander M."/>
            <person name="Rudolph-Geiger S."/>
            <person name="Teucke M."/>
            <person name="Lanz C."/>
            <person name="Raddatz G."/>
            <person name="Osoegawa K."/>
            <person name="Zhu B."/>
            <person name="Rapp A."/>
            <person name="Widaa S."/>
            <person name="Langford C."/>
            <person name="Yang F."/>
            <person name="Schuster S.C."/>
            <person name="Carter N.P."/>
            <person name="Harrow J."/>
            <person name="Ning Z."/>
            <person name="Herrero J."/>
            <person name="Searle S.M."/>
            <person name="Enright A."/>
            <person name="Geisler R."/>
            <person name="Plasterk R.H."/>
            <person name="Lee C."/>
            <person name="Westerfield M."/>
            <person name="de Jong P.J."/>
            <person name="Zon L.I."/>
            <person name="Postlethwait J.H."/>
            <person name="Nusslein-Volhard C."/>
            <person name="Hubbard T.J."/>
            <person name="Roest Crollius H."/>
            <person name="Rogers J."/>
            <person name="Stemple D.L."/>
        </authorList>
    </citation>
    <scope>NUCLEOTIDE SEQUENCE [LARGE SCALE GENOMIC DNA]</scope>
    <source>
        <strain>Tuebingen</strain>
    </source>
</reference>
<feature type="chain" id="PRO_0000278490" description="SH3 and PX domain-containing protein 2A">
    <location>
        <begin position="1"/>
        <end position="1119"/>
    </location>
</feature>
<feature type="domain" description="PX" evidence="2">
    <location>
        <begin position="4"/>
        <end position="128"/>
    </location>
</feature>
<feature type="domain" description="SH3 1" evidence="3">
    <location>
        <begin position="149"/>
        <end position="208"/>
    </location>
</feature>
<feature type="domain" description="SH3 2" evidence="3">
    <location>
        <begin position="249"/>
        <end position="308"/>
    </location>
</feature>
<feature type="domain" description="SH3 3" evidence="3">
    <location>
        <begin position="445"/>
        <end position="504"/>
    </location>
</feature>
<feature type="domain" description="SH3 4" evidence="3">
    <location>
        <begin position="812"/>
        <end position="871"/>
    </location>
</feature>
<feature type="domain" description="SH3 5" evidence="3">
    <location>
        <begin position="1058"/>
        <end position="1119"/>
    </location>
</feature>
<feature type="region of interest" description="Disordered" evidence="4">
    <location>
        <begin position="388"/>
        <end position="429"/>
    </location>
</feature>
<feature type="region of interest" description="Disordered" evidence="4">
    <location>
        <begin position="494"/>
        <end position="595"/>
    </location>
</feature>
<feature type="region of interest" description="Disordered" evidence="4">
    <location>
        <begin position="641"/>
        <end position="815"/>
    </location>
</feature>
<feature type="region of interest" description="Disordered" evidence="4">
    <location>
        <begin position="914"/>
        <end position="941"/>
    </location>
</feature>
<feature type="region of interest" description="Disordered" evidence="4">
    <location>
        <begin position="957"/>
        <end position="1004"/>
    </location>
</feature>
<feature type="compositionally biased region" description="Basic and acidic residues" evidence="4">
    <location>
        <begin position="581"/>
        <end position="590"/>
    </location>
</feature>
<feature type="compositionally biased region" description="Basic and acidic residues" evidence="4">
    <location>
        <begin position="688"/>
        <end position="718"/>
    </location>
</feature>
<feature type="compositionally biased region" description="Low complexity" evidence="4">
    <location>
        <begin position="779"/>
        <end position="802"/>
    </location>
</feature>
<feature type="compositionally biased region" description="Basic and acidic residues" evidence="4">
    <location>
        <begin position="806"/>
        <end position="815"/>
    </location>
</feature>
<comment type="function">
    <text evidence="1">Adapter protein involved in invadopodia and podosome formation and extracellular matrix degradation.</text>
</comment>
<comment type="subcellular location">
    <subcellularLocation>
        <location evidence="1">Cytoplasm</location>
    </subcellularLocation>
    <subcellularLocation>
        <location evidence="1">Cell projection</location>
        <location evidence="1">Podosome</location>
    </subcellularLocation>
</comment>
<comment type="domain">
    <text evidence="1">The PX domain is required for podosome localization because of its ability to bind phosphatidylinositol 3-phosphate (PtdIns(3)P) and phosphatidylinositol 3,4-bisphosphate (PtdIns(3,4)P2) and, to a lesser extent, phosphatidylinositol 4-phosphate (PtdIns(4)P), phosphatidylinositol 5-phosphate (PtdIns(5)P), and phosphatidylinositol 3,5-bisphosphate (PtdIns(3,5)P2). Binds to the third intramolecular SH3 domain (By similarity).</text>
</comment>
<comment type="PTM">
    <text evidence="1">Tyrosine phosphorylated.</text>
</comment>
<comment type="similarity">
    <text evidence="5">Belongs to the SH3PXD2 family.</text>
</comment>
<keyword id="KW-0965">Cell junction</keyword>
<keyword id="KW-0966">Cell projection</keyword>
<keyword id="KW-0963">Cytoplasm</keyword>
<keyword id="KW-0597">Phosphoprotein</keyword>
<keyword id="KW-1185">Reference proteome</keyword>
<keyword id="KW-0677">Repeat</keyword>
<keyword id="KW-0728">SH3 domain</keyword>
<protein>
    <recommendedName>
        <fullName>SH3 and PX domain-containing protein 2A</fullName>
    </recommendedName>
</protein>
<evidence type="ECO:0000250" key="1"/>
<evidence type="ECO:0000255" key="2">
    <source>
        <dbReference type="PROSITE-ProRule" id="PRU00147"/>
    </source>
</evidence>
<evidence type="ECO:0000255" key="3">
    <source>
        <dbReference type="PROSITE-ProRule" id="PRU00192"/>
    </source>
</evidence>
<evidence type="ECO:0000256" key="4">
    <source>
        <dbReference type="SAM" id="MobiDB-lite"/>
    </source>
</evidence>
<evidence type="ECO:0000305" key="5"/>
<dbReference type="EMBL" id="BX005220">
    <property type="protein sequence ID" value="CAK11222.1"/>
    <property type="molecule type" value="Genomic_DNA"/>
</dbReference>
<dbReference type="EMBL" id="CT737229">
    <property type="status" value="NOT_ANNOTATED_CDS"/>
    <property type="molecule type" value="Genomic_DNA"/>
</dbReference>
<dbReference type="RefSeq" id="XP_005171051.1">
    <property type="nucleotide sequence ID" value="XM_005170994.3"/>
</dbReference>
<dbReference type="SMR" id="Q1LYG0"/>
<dbReference type="FunCoup" id="Q1LYG0">
    <property type="interactions" value="1667"/>
</dbReference>
<dbReference type="STRING" id="7955.ENSDARP00000127586"/>
<dbReference type="PaxDb" id="7955-ENSDARP00000104186"/>
<dbReference type="GeneID" id="562018"/>
<dbReference type="AGR" id="ZFIN:ZDB-GENE-060503-271"/>
<dbReference type="CTD" id="562018"/>
<dbReference type="ZFIN" id="ZDB-GENE-060503-271">
    <property type="gene designation" value="sh3pxd2aa"/>
</dbReference>
<dbReference type="eggNOG" id="KOG4773">
    <property type="taxonomic scope" value="Eukaryota"/>
</dbReference>
<dbReference type="InParanoid" id="Q1LYG0"/>
<dbReference type="OrthoDB" id="10255964at2759"/>
<dbReference type="PhylomeDB" id="Q1LYG0"/>
<dbReference type="TreeFam" id="TF329347"/>
<dbReference type="ChiTaRS" id="sh3pxd2aa">
    <property type="organism name" value="zebrafish"/>
</dbReference>
<dbReference type="PRO" id="PR:Q1LYG0"/>
<dbReference type="Proteomes" id="UP000000437">
    <property type="component" value="Chromosome 1"/>
</dbReference>
<dbReference type="GO" id="GO:0070161">
    <property type="term" value="C:anchoring junction"/>
    <property type="evidence" value="ECO:0007669"/>
    <property type="project" value="UniProtKB-KW"/>
</dbReference>
<dbReference type="GO" id="GO:0042995">
    <property type="term" value="C:cell projection"/>
    <property type="evidence" value="ECO:0007669"/>
    <property type="project" value="UniProtKB-KW"/>
</dbReference>
<dbReference type="GO" id="GO:0005737">
    <property type="term" value="C:cytoplasm"/>
    <property type="evidence" value="ECO:0000250"/>
    <property type="project" value="UniProtKB"/>
</dbReference>
<dbReference type="GO" id="GO:0002102">
    <property type="term" value="C:podosome"/>
    <property type="evidence" value="ECO:0000250"/>
    <property type="project" value="UniProtKB"/>
</dbReference>
<dbReference type="GO" id="GO:0035091">
    <property type="term" value="F:phosphatidylinositol binding"/>
    <property type="evidence" value="ECO:0007669"/>
    <property type="project" value="InterPro"/>
</dbReference>
<dbReference type="GO" id="GO:0016176">
    <property type="term" value="F:superoxide-generating NADPH oxidase activator activity"/>
    <property type="evidence" value="ECO:0000318"/>
    <property type="project" value="GO_Central"/>
</dbReference>
<dbReference type="GO" id="GO:0001755">
    <property type="term" value="P:neural crest cell migration"/>
    <property type="evidence" value="ECO:0000315"/>
    <property type="project" value="ZFIN"/>
</dbReference>
<dbReference type="GO" id="GO:0072593">
    <property type="term" value="P:reactive oxygen species metabolic process"/>
    <property type="evidence" value="ECO:0000250"/>
    <property type="project" value="UniProtKB"/>
</dbReference>
<dbReference type="GO" id="GO:0042554">
    <property type="term" value="P:superoxide anion generation"/>
    <property type="evidence" value="ECO:0000318"/>
    <property type="project" value="GO_Central"/>
</dbReference>
<dbReference type="GO" id="GO:0006801">
    <property type="term" value="P:superoxide metabolic process"/>
    <property type="evidence" value="ECO:0000250"/>
    <property type="project" value="UniProtKB"/>
</dbReference>
<dbReference type="CDD" id="cd06888">
    <property type="entry name" value="PX_FISH"/>
    <property type="match status" value="1"/>
</dbReference>
<dbReference type="CDD" id="cd12074">
    <property type="entry name" value="SH3_Tks5_1"/>
    <property type="match status" value="1"/>
</dbReference>
<dbReference type="CDD" id="cd12077">
    <property type="entry name" value="SH3_Tks5_2"/>
    <property type="match status" value="1"/>
</dbReference>
<dbReference type="CDD" id="cd12079">
    <property type="entry name" value="SH3_Tks5_3"/>
    <property type="match status" value="1"/>
</dbReference>
<dbReference type="CDD" id="cd12019">
    <property type="entry name" value="SH3_Tks5_4"/>
    <property type="match status" value="1"/>
</dbReference>
<dbReference type="CDD" id="cd12020">
    <property type="entry name" value="SH3_Tks5_5"/>
    <property type="match status" value="1"/>
</dbReference>
<dbReference type="FunFam" id="2.30.30.40:FF:000020">
    <property type="entry name" value="SH3 and PX domain-containing protein 2A"/>
    <property type="match status" value="1"/>
</dbReference>
<dbReference type="FunFam" id="2.30.30.40:FF:000031">
    <property type="entry name" value="SH3 and PX domain-containing protein 2A"/>
    <property type="match status" value="1"/>
</dbReference>
<dbReference type="FunFam" id="2.30.30.40:FF:000042">
    <property type="entry name" value="SH3 and PX domain-containing protein 2A"/>
    <property type="match status" value="1"/>
</dbReference>
<dbReference type="FunFam" id="2.30.30.40:FF:000059">
    <property type="entry name" value="SH3 and PX domain-containing protein 2A"/>
    <property type="match status" value="1"/>
</dbReference>
<dbReference type="FunFam" id="2.30.30.40:FF:000141">
    <property type="entry name" value="SH3 and PX domain-containing protein 2A"/>
    <property type="match status" value="1"/>
</dbReference>
<dbReference type="FunFam" id="3.30.1520.10:FF:000005">
    <property type="entry name" value="SH3 and PX domain-containing protein 2B"/>
    <property type="match status" value="1"/>
</dbReference>
<dbReference type="Gene3D" id="3.30.1520.10">
    <property type="entry name" value="Phox-like domain"/>
    <property type="match status" value="1"/>
</dbReference>
<dbReference type="Gene3D" id="2.30.30.40">
    <property type="entry name" value="SH3 Domains"/>
    <property type="match status" value="5"/>
</dbReference>
<dbReference type="InterPro" id="IPR051228">
    <property type="entry name" value="NADPH_Oxidase/PX-Domain"/>
</dbReference>
<dbReference type="InterPro" id="IPR001683">
    <property type="entry name" value="PX_dom"/>
</dbReference>
<dbReference type="InterPro" id="IPR036871">
    <property type="entry name" value="PX_dom_sf"/>
</dbReference>
<dbReference type="InterPro" id="IPR036028">
    <property type="entry name" value="SH3-like_dom_sf"/>
</dbReference>
<dbReference type="InterPro" id="IPR001452">
    <property type="entry name" value="SH3_domain"/>
</dbReference>
<dbReference type="InterPro" id="IPR037961">
    <property type="entry name" value="SH3PXD2_PX"/>
</dbReference>
<dbReference type="InterPro" id="IPR035450">
    <property type="entry name" value="SH3PXD2A_SH3_1"/>
</dbReference>
<dbReference type="InterPro" id="IPR035452">
    <property type="entry name" value="SH3PXD2A_SH3_2"/>
</dbReference>
<dbReference type="InterPro" id="IPR035449">
    <property type="entry name" value="SH3PXD2A_SH3_3"/>
</dbReference>
<dbReference type="InterPro" id="IPR035453">
    <property type="entry name" value="SH3PXD2A_SH3_4"/>
</dbReference>
<dbReference type="InterPro" id="IPR035454">
    <property type="entry name" value="SH3PXD2A_SH3_5"/>
</dbReference>
<dbReference type="PANTHER" id="PTHR15706:SF2">
    <property type="entry name" value="SH3 AND PX DOMAIN-CONTAINING PROTEIN 2A"/>
    <property type="match status" value="1"/>
</dbReference>
<dbReference type="PANTHER" id="PTHR15706">
    <property type="entry name" value="SH3 MULTIPLE DOMAIN"/>
    <property type="match status" value="1"/>
</dbReference>
<dbReference type="Pfam" id="PF00787">
    <property type="entry name" value="PX"/>
    <property type="match status" value="1"/>
</dbReference>
<dbReference type="Pfam" id="PF00018">
    <property type="entry name" value="SH3_1"/>
    <property type="match status" value="3"/>
</dbReference>
<dbReference type="Pfam" id="PF07653">
    <property type="entry name" value="SH3_2"/>
    <property type="match status" value="2"/>
</dbReference>
<dbReference type="SMART" id="SM00312">
    <property type="entry name" value="PX"/>
    <property type="match status" value="1"/>
</dbReference>
<dbReference type="SMART" id="SM00326">
    <property type="entry name" value="SH3"/>
    <property type="match status" value="5"/>
</dbReference>
<dbReference type="SUPFAM" id="SSF64268">
    <property type="entry name" value="PX domain"/>
    <property type="match status" value="1"/>
</dbReference>
<dbReference type="SUPFAM" id="SSF50044">
    <property type="entry name" value="SH3-domain"/>
    <property type="match status" value="5"/>
</dbReference>
<dbReference type="PROSITE" id="PS50195">
    <property type="entry name" value="PX"/>
    <property type="match status" value="1"/>
</dbReference>
<dbReference type="PROSITE" id="PS50002">
    <property type="entry name" value="SH3"/>
    <property type="match status" value="5"/>
</dbReference>
<organism>
    <name type="scientific">Danio rerio</name>
    <name type="common">Zebrafish</name>
    <name type="synonym">Brachydanio rerio</name>
    <dbReference type="NCBI Taxonomy" id="7955"/>
    <lineage>
        <taxon>Eukaryota</taxon>
        <taxon>Metazoa</taxon>
        <taxon>Chordata</taxon>
        <taxon>Craniata</taxon>
        <taxon>Vertebrata</taxon>
        <taxon>Euteleostomi</taxon>
        <taxon>Actinopterygii</taxon>
        <taxon>Neopterygii</taxon>
        <taxon>Teleostei</taxon>
        <taxon>Ostariophysi</taxon>
        <taxon>Cypriniformes</taxon>
        <taxon>Danionidae</taxon>
        <taxon>Danioninae</taxon>
        <taxon>Danio</taxon>
    </lineage>
</organism>